<proteinExistence type="evidence at protein level"/>
<reference key="1">
    <citation type="journal article" date="2011" name="Genome Biol.">
        <title>Comparative and functional genomics provide insights into the pathogenicity of dermatophytic fungi.</title>
        <authorList>
            <person name="Burmester A."/>
            <person name="Shelest E."/>
            <person name="Gloeckner G."/>
            <person name="Heddergott C."/>
            <person name="Schindler S."/>
            <person name="Staib P."/>
            <person name="Heidel A."/>
            <person name="Felder M."/>
            <person name="Petzold A."/>
            <person name="Szafranski K."/>
            <person name="Feuermann M."/>
            <person name="Pedruzzi I."/>
            <person name="Priebe S."/>
            <person name="Groth M."/>
            <person name="Winkler R."/>
            <person name="Li W."/>
            <person name="Kniemeyer O."/>
            <person name="Schroeckh V."/>
            <person name="Hertweck C."/>
            <person name="Hube B."/>
            <person name="White T.C."/>
            <person name="Platzer M."/>
            <person name="Guthke R."/>
            <person name="Heitman J."/>
            <person name="Woestemeyer J."/>
            <person name="Zipfel P.F."/>
            <person name="Monod M."/>
            <person name="Brakhage A.A."/>
        </authorList>
    </citation>
    <scope>NUCLEOTIDE SEQUENCE [LARGE SCALE GENOMIC DNA]</scope>
    <source>
        <strain>ATCC MYA-4681 / CBS 112371</strain>
    </source>
</reference>
<reference key="2">
    <citation type="journal article" date="2011" name="Proteomics">
        <title>Identification of novel secreted proteases during extracellular proteolysis by dermatophytes at acidic pH.</title>
        <authorList>
            <person name="Sriranganadane D."/>
            <person name="Waridel P."/>
            <person name="Salamin K."/>
            <person name="Feuermann M."/>
            <person name="Mignon B."/>
            <person name="Staib P."/>
            <person name="Neuhaus J.M."/>
            <person name="Quadroni M."/>
            <person name="Monod M."/>
        </authorList>
    </citation>
    <scope>IDENTIFICATION BY MASS SPECTROMETRY</scope>
    <scope>SUBCELLULAR LOCATION</scope>
</reference>
<dbReference type="EC" id="3.1.1.5" evidence="1"/>
<dbReference type="EMBL" id="ABSU01000004">
    <property type="protein sequence ID" value="EFE34963.1"/>
    <property type="molecule type" value="Genomic_DNA"/>
</dbReference>
<dbReference type="RefSeq" id="XP_003015608.1">
    <property type="nucleotide sequence ID" value="XM_003015562.1"/>
</dbReference>
<dbReference type="SMR" id="D4ANV2"/>
<dbReference type="STRING" id="663331.D4ANV2"/>
<dbReference type="GeneID" id="9525889"/>
<dbReference type="KEGG" id="abe:ARB_05919"/>
<dbReference type="eggNOG" id="KOG1325">
    <property type="taxonomic scope" value="Eukaryota"/>
</dbReference>
<dbReference type="HOGENOM" id="CLU_014602_0_0_1"/>
<dbReference type="OMA" id="TDWWGRA"/>
<dbReference type="OrthoDB" id="4084751at2759"/>
<dbReference type="Proteomes" id="UP000008866">
    <property type="component" value="Unassembled WGS sequence"/>
</dbReference>
<dbReference type="GO" id="GO:0005829">
    <property type="term" value="C:cytosol"/>
    <property type="evidence" value="ECO:0007669"/>
    <property type="project" value="TreeGrafter"/>
</dbReference>
<dbReference type="GO" id="GO:0005783">
    <property type="term" value="C:endoplasmic reticulum"/>
    <property type="evidence" value="ECO:0007669"/>
    <property type="project" value="TreeGrafter"/>
</dbReference>
<dbReference type="GO" id="GO:0005576">
    <property type="term" value="C:extracellular region"/>
    <property type="evidence" value="ECO:0007669"/>
    <property type="project" value="UniProtKB-SubCell"/>
</dbReference>
<dbReference type="GO" id="GO:0004622">
    <property type="term" value="F:lysophospholipase activity"/>
    <property type="evidence" value="ECO:0007669"/>
    <property type="project" value="UniProtKB-EC"/>
</dbReference>
<dbReference type="GO" id="GO:0004623">
    <property type="term" value="F:phospholipase A2 activity"/>
    <property type="evidence" value="ECO:0007669"/>
    <property type="project" value="TreeGrafter"/>
</dbReference>
<dbReference type="GO" id="GO:0046475">
    <property type="term" value="P:glycerophospholipid catabolic process"/>
    <property type="evidence" value="ECO:0007669"/>
    <property type="project" value="TreeGrafter"/>
</dbReference>
<dbReference type="FunFam" id="3.40.1090.10:FF:000010">
    <property type="entry name" value="Lysophospholipase"/>
    <property type="match status" value="1"/>
</dbReference>
<dbReference type="Gene3D" id="3.40.1090.10">
    <property type="entry name" value="Cytosolic phospholipase A2 catalytic domain"/>
    <property type="match status" value="1"/>
</dbReference>
<dbReference type="InterPro" id="IPR016035">
    <property type="entry name" value="Acyl_Trfase/lysoPLipase"/>
</dbReference>
<dbReference type="InterPro" id="IPR002642">
    <property type="entry name" value="LysoPLipase_cat_dom"/>
</dbReference>
<dbReference type="PANTHER" id="PTHR10728">
    <property type="entry name" value="CYTOSOLIC PHOSPHOLIPASE A2"/>
    <property type="match status" value="1"/>
</dbReference>
<dbReference type="PANTHER" id="PTHR10728:SF33">
    <property type="entry name" value="LYSOPHOSPHOLIPASE 1-RELATED"/>
    <property type="match status" value="1"/>
</dbReference>
<dbReference type="Pfam" id="PF01735">
    <property type="entry name" value="PLA2_B"/>
    <property type="match status" value="1"/>
</dbReference>
<dbReference type="SMART" id="SM00022">
    <property type="entry name" value="PLAc"/>
    <property type="match status" value="1"/>
</dbReference>
<dbReference type="SUPFAM" id="SSF52151">
    <property type="entry name" value="FabD/lysophospholipase-like"/>
    <property type="match status" value="1"/>
</dbReference>
<dbReference type="PROSITE" id="PS51210">
    <property type="entry name" value="PLA2C"/>
    <property type="match status" value="1"/>
</dbReference>
<accession>D4ANV2</accession>
<name>PLB1_ARTBC</name>
<keyword id="KW-0325">Glycoprotein</keyword>
<keyword id="KW-0378">Hydrolase</keyword>
<keyword id="KW-0442">Lipid degradation</keyword>
<keyword id="KW-0443">Lipid metabolism</keyword>
<keyword id="KW-1185">Reference proteome</keyword>
<keyword id="KW-0964">Secreted</keyword>
<keyword id="KW-0732">Signal</keyword>
<sequence>MMFIPATLGTFVLASLLPATVGAGIPNAAADVAVRALPNAPDGYAPAEVDCPSTKPAVRSAAKLSQQEQDWLKKRRMKTTGAMADFFSRVKIEGFDAVAYLVGNADNVAKLPNVAIAVSGGGYRALMNGAGALKAFDSRTDNSTEPGQLGGLLQSATYLSGLSGGGWLLGSMYVNNDSTITELQKGGSNSLWKFNRSILEGPDDGSSGVVDTAEYYKEMIKEISRKKAAGFETSITDIWGRALSYQLINAPKGGPAYTWSSISQNSKFQSGDVPFPLLVADGRNPGEKLIGGNATIFEFNPYEFGTWDPTIFGFVPTQYIGSKFEAGTLPSDEKCVRGMDNAGFIMGTSSSLFNQFALHLDSQDLPKVVKDSLRDFLSSLDEANNDIAEYKPNPFFGYAKSTSPFAGVKSLPVVDGGEDKQNIPFHPLIQPARHVDVIFAIDSSADTELAWPNGDSIIATYQRSLNSTGIANGTSFPAIPDNNTFINLGLNHNPTFFGCDSSNTTNPTPLIVYIPNSPYVTHSNVSTFNLKYNTTQRDAIILNGYNVATMANATRDGNWPTCVGCAMLSRSLERTKTAVPDACKQCFKMYCWDGTLNSTKPDVYDPKLFLTEVDLQSAAKGLHASGKLSLVAAVVTLLSILLV</sequence>
<comment type="function">
    <text evidence="1 2">Catalyzes the release of fatty acids from lysophospholipids (By similarity). Phospholipase B may well contribute to pathogenicity by abetting the fungus in damaging host cell membranes (By similarity).</text>
</comment>
<comment type="catalytic activity">
    <reaction evidence="1">
        <text>a 1-acyl-sn-glycero-3-phosphocholine + H2O = sn-glycerol 3-phosphocholine + a fatty acid + H(+)</text>
        <dbReference type="Rhea" id="RHEA:15177"/>
        <dbReference type="ChEBI" id="CHEBI:15377"/>
        <dbReference type="ChEBI" id="CHEBI:15378"/>
        <dbReference type="ChEBI" id="CHEBI:16870"/>
        <dbReference type="ChEBI" id="CHEBI:28868"/>
        <dbReference type="ChEBI" id="CHEBI:58168"/>
        <dbReference type="EC" id="3.1.1.5"/>
    </reaction>
</comment>
<comment type="subcellular location">
    <subcellularLocation>
        <location evidence="6">Secreted</location>
    </subcellularLocation>
</comment>
<comment type="similarity">
    <text evidence="7">Belongs to the lysophospholipase family.</text>
</comment>
<gene>
    <name type="ORF">ARB_05919</name>
</gene>
<evidence type="ECO:0000250" key="1">
    <source>
        <dbReference type="UniProtKB" id="P39105"/>
    </source>
</evidence>
<evidence type="ECO:0000250" key="2">
    <source>
        <dbReference type="UniProtKB" id="Q9UWF6"/>
    </source>
</evidence>
<evidence type="ECO:0000255" key="3"/>
<evidence type="ECO:0000255" key="4">
    <source>
        <dbReference type="PROSITE-ProRule" id="PRU00498"/>
    </source>
</evidence>
<evidence type="ECO:0000255" key="5">
    <source>
        <dbReference type="PROSITE-ProRule" id="PRU00555"/>
    </source>
</evidence>
<evidence type="ECO:0000269" key="6">
    <source>
    </source>
</evidence>
<evidence type="ECO:0000305" key="7"/>
<protein>
    <recommendedName>
        <fullName evidence="7">Lysophospholipase ARB_05919</fullName>
        <ecNumber evidence="1">3.1.1.5</ecNumber>
    </recommendedName>
    <alternativeName>
        <fullName evidence="7">Phospholipase B</fullName>
    </alternativeName>
</protein>
<feature type="signal peptide" evidence="3">
    <location>
        <begin position="1"/>
        <end position="22"/>
    </location>
</feature>
<feature type="chain" id="PRO_5001437818" description="Lysophospholipase ARB_05919" evidence="3">
    <location>
        <begin position="23"/>
        <end position="643"/>
    </location>
</feature>
<feature type="domain" description="PLA2c" evidence="5">
    <location>
        <begin position="50"/>
        <end position="597"/>
    </location>
</feature>
<feature type="glycosylation site" description="N-linked (GlcNAc...) asparagine" evidence="4">
    <location>
        <position position="142"/>
    </location>
</feature>
<feature type="glycosylation site" description="N-linked (GlcNAc...) asparagine" evidence="4">
    <location>
        <position position="176"/>
    </location>
</feature>
<feature type="glycosylation site" description="N-linked (GlcNAc...) asparagine" evidence="4">
    <location>
        <position position="195"/>
    </location>
</feature>
<feature type="glycosylation site" description="N-linked (GlcNAc...) asparagine" evidence="4">
    <location>
        <position position="293"/>
    </location>
</feature>
<feature type="glycosylation site" description="N-linked (GlcNAc...) asparagine" evidence="4">
    <location>
        <position position="466"/>
    </location>
</feature>
<feature type="glycosylation site" description="N-linked (GlcNAc...) asparagine" evidence="4">
    <location>
        <position position="472"/>
    </location>
</feature>
<feature type="glycosylation site" description="N-linked (GlcNAc...) asparagine" evidence="4">
    <location>
        <position position="482"/>
    </location>
</feature>
<feature type="glycosylation site" description="N-linked (GlcNAc...) asparagine" evidence="4">
    <location>
        <position position="503"/>
    </location>
</feature>
<feature type="glycosylation site" description="N-linked (GlcNAc...) asparagine" evidence="4">
    <location>
        <position position="524"/>
    </location>
</feature>
<feature type="glycosylation site" description="N-linked (GlcNAc...) asparagine" evidence="4">
    <location>
        <position position="533"/>
    </location>
</feature>
<feature type="glycosylation site" description="N-linked (GlcNAc...) asparagine" evidence="4">
    <location>
        <position position="552"/>
    </location>
</feature>
<feature type="glycosylation site" description="N-linked (GlcNAc...) asparagine" evidence="4">
    <location>
        <position position="597"/>
    </location>
</feature>
<organism>
    <name type="scientific">Arthroderma benhamiae (strain ATCC MYA-4681 / CBS 112371)</name>
    <name type="common">Trichophyton mentagrophytes</name>
    <dbReference type="NCBI Taxonomy" id="663331"/>
    <lineage>
        <taxon>Eukaryota</taxon>
        <taxon>Fungi</taxon>
        <taxon>Dikarya</taxon>
        <taxon>Ascomycota</taxon>
        <taxon>Pezizomycotina</taxon>
        <taxon>Eurotiomycetes</taxon>
        <taxon>Eurotiomycetidae</taxon>
        <taxon>Onygenales</taxon>
        <taxon>Arthrodermataceae</taxon>
        <taxon>Trichophyton</taxon>
    </lineage>
</organism>